<organism>
    <name type="scientific">Methanosarcina acetivorans (strain ATCC 35395 / DSM 2834 / JCM 12185 / C2A)</name>
    <dbReference type="NCBI Taxonomy" id="188937"/>
    <lineage>
        <taxon>Archaea</taxon>
        <taxon>Methanobacteriati</taxon>
        <taxon>Methanobacteriota</taxon>
        <taxon>Stenosarchaea group</taxon>
        <taxon>Methanomicrobia</taxon>
        <taxon>Methanosarcinales</taxon>
        <taxon>Methanosarcinaceae</taxon>
        <taxon>Methanosarcina</taxon>
    </lineage>
</organism>
<comment type="similarity">
    <text evidence="1">Belongs to the PDCD5 family.</text>
</comment>
<sequence length="122" mass="14203">MIAMSNMDDELEEIRKRRLAEIQRQQAQQQPSDVQAAYQQEQARAEMEAQKQAILRQILTPEARERLTTLKMSRPALGEQLEMQLISLAQSGRLKAQIDDEQLKTLLMRMQPKKRKTSITRV</sequence>
<reference key="1">
    <citation type="journal article" date="2002" name="Genome Res.">
        <title>The genome of Methanosarcina acetivorans reveals extensive metabolic and physiological diversity.</title>
        <authorList>
            <person name="Galagan J.E."/>
            <person name="Nusbaum C."/>
            <person name="Roy A."/>
            <person name="Endrizzi M.G."/>
            <person name="Macdonald P."/>
            <person name="FitzHugh W."/>
            <person name="Calvo S."/>
            <person name="Engels R."/>
            <person name="Smirnov S."/>
            <person name="Atnoor D."/>
            <person name="Brown A."/>
            <person name="Allen N."/>
            <person name="Naylor J."/>
            <person name="Stange-Thomann N."/>
            <person name="DeArellano K."/>
            <person name="Johnson R."/>
            <person name="Linton L."/>
            <person name="McEwan P."/>
            <person name="McKernan K."/>
            <person name="Talamas J."/>
            <person name="Tirrell A."/>
            <person name="Ye W."/>
            <person name="Zimmer A."/>
            <person name="Barber R.D."/>
            <person name="Cann I."/>
            <person name="Graham D.E."/>
            <person name="Grahame D.A."/>
            <person name="Guss A.M."/>
            <person name="Hedderich R."/>
            <person name="Ingram-Smith C."/>
            <person name="Kuettner H.C."/>
            <person name="Krzycki J.A."/>
            <person name="Leigh J.A."/>
            <person name="Li W."/>
            <person name="Liu J."/>
            <person name="Mukhopadhyay B."/>
            <person name="Reeve J.N."/>
            <person name="Smith K."/>
            <person name="Springer T.A."/>
            <person name="Umayam L.A."/>
            <person name="White O."/>
            <person name="White R.H."/>
            <person name="de Macario E.C."/>
            <person name="Ferry J.G."/>
            <person name="Jarrell K.F."/>
            <person name="Jing H."/>
            <person name="Macario A.J.L."/>
            <person name="Paulsen I.T."/>
            <person name="Pritchett M."/>
            <person name="Sowers K.R."/>
            <person name="Swanson R.V."/>
            <person name="Zinder S.H."/>
            <person name="Lander E."/>
            <person name="Metcalf W.W."/>
            <person name="Birren B."/>
        </authorList>
    </citation>
    <scope>NUCLEOTIDE SEQUENCE [LARGE SCALE GENOMIC DNA]</scope>
    <source>
        <strain>ATCC 35395 / DSM 2834 / JCM 12185 / C2A</strain>
    </source>
</reference>
<accession>Q8TIN0</accession>
<dbReference type="EMBL" id="AE010299">
    <property type="protein sequence ID" value="AAM07464.1"/>
    <property type="molecule type" value="Genomic_DNA"/>
</dbReference>
<dbReference type="RefSeq" id="WP_011024007.1">
    <property type="nucleotide sequence ID" value="NC_003552.1"/>
</dbReference>
<dbReference type="SMR" id="Q8TIN0"/>
<dbReference type="FunCoup" id="Q8TIN0">
    <property type="interactions" value="95"/>
</dbReference>
<dbReference type="STRING" id="188937.MA_4116"/>
<dbReference type="EnsemblBacteria" id="AAM07464">
    <property type="protein sequence ID" value="AAM07464"/>
    <property type="gene ID" value="MA_4116"/>
</dbReference>
<dbReference type="GeneID" id="1476010"/>
<dbReference type="KEGG" id="mac:MA_4116"/>
<dbReference type="HOGENOM" id="CLU_122978_3_0_2"/>
<dbReference type="InParanoid" id="Q8TIN0"/>
<dbReference type="OrthoDB" id="7912at2157"/>
<dbReference type="PhylomeDB" id="Q8TIN0"/>
<dbReference type="Proteomes" id="UP000002487">
    <property type="component" value="Chromosome"/>
</dbReference>
<dbReference type="GO" id="GO:0005829">
    <property type="term" value="C:cytosol"/>
    <property type="evidence" value="ECO:0000318"/>
    <property type="project" value="GO_Central"/>
</dbReference>
<dbReference type="GO" id="GO:0003677">
    <property type="term" value="F:DNA binding"/>
    <property type="evidence" value="ECO:0007669"/>
    <property type="project" value="UniProtKB-UniRule"/>
</dbReference>
<dbReference type="Gene3D" id="1.10.8.140">
    <property type="entry name" value="PDCD5-like"/>
    <property type="match status" value="1"/>
</dbReference>
<dbReference type="HAMAP" id="MF_00026">
    <property type="entry name" value="dsDNA_bind"/>
    <property type="match status" value="1"/>
</dbReference>
<dbReference type="InterPro" id="IPR022889">
    <property type="entry name" value="DNA_bind_arc"/>
</dbReference>
<dbReference type="InterPro" id="IPR002836">
    <property type="entry name" value="PDCD5-like"/>
</dbReference>
<dbReference type="InterPro" id="IPR036883">
    <property type="entry name" value="PDCD5-like_sf"/>
</dbReference>
<dbReference type="NCBIfam" id="NF003268">
    <property type="entry name" value="PRK04239.1"/>
    <property type="match status" value="1"/>
</dbReference>
<dbReference type="PANTHER" id="PTHR10840">
    <property type="entry name" value="PROGRAMMED CELL DEATH PROTEIN 5"/>
    <property type="match status" value="1"/>
</dbReference>
<dbReference type="PANTHER" id="PTHR10840:SF0">
    <property type="entry name" value="PROGRAMMED CELL DEATH PROTEIN 5"/>
    <property type="match status" value="1"/>
</dbReference>
<dbReference type="Pfam" id="PF01984">
    <property type="entry name" value="dsDNA_bind"/>
    <property type="match status" value="1"/>
</dbReference>
<dbReference type="PIRSF" id="PIRSF015730">
    <property type="entry name" value="TFAR19"/>
    <property type="match status" value="1"/>
</dbReference>
<dbReference type="SUPFAM" id="SSF46950">
    <property type="entry name" value="Double-stranded DNA-binding domain"/>
    <property type="match status" value="1"/>
</dbReference>
<evidence type="ECO:0000255" key="1">
    <source>
        <dbReference type="HAMAP-Rule" id="MF_00026"/>
    </source>
</evidence>
<evidence type="ECO:0000256" key="2">
    <source>
        <dbReference type="SAM" id="MobiDB-lite"/>
    </source>
</evidence>
<gene>
    <name type="ordered locus">MA_4116</name>
</gene>
<name>Y4116_METAC</name>
<proteinExistence type="inferred from homology"/>
<keyword id="KW-0238">DNA-binding</keyword>
<keyword id="KW-1185">Reference proteome</keyword>
<protein>
    <recommendedName>
        <fullName evidence="1">DNA-binding protein MA_4116</fullName>
    </recommendedName>
</protein>
<feature type="chain" id="PRO_0000121554" description="DNA-binding protein MA_4116">
    <location>
        <begin position="1"/>
        <end position="122"/>
    </location>
</feature>
<feature type="region of interest" description="Disordered" evidence="2">
    <location>
        <begin position="22"/>
        <end position="42"/>
    </location>
</feature>